<name>QUEA_ALKMQ</name>
<dbReference type="EC" id="2.4.99.17" evidence="1"/>
<dbReference type="EMBL" id="CP000724">
    <property type="protein sequence ID" value="ABR48495.1"/>
    <property type="molecule type" value="Genomic_DNA"/>
</dbReference>
<dbReference type="RefSeq" id="WP_012063470.1">
    <property type="nucleotide sequence ID" value="NC_009633.1"/>
</dbReference>
<dbReference type="SMR" id="A6TQM7"/>
<dbReference type="STRING" id="293826.Amet_2341"/>
<dbReference type="KEGG" id="amt:Amet_2341"/>
<dbReference type="eggNOG" id="COG0809">
    <property type="taxonomic scope" value="Bacteria"/>
</dbReference>
<dbReference type="HOGENOM" id="CLU_039110_1_0_9"/>
<dbReference type="OrthoDB" id="9805933at2"/>
<dbReference type="UniPathway" id="UPA00392"/>
<dbReference type="Proteomes" id="UP000001572">
    <property type="component" value="Chromosome"/>
</dbReference>
<dbReference type="GO" id="GO:0005737">
    <property type="term" value="C:cytoplasm"/>
    <property type="evidence" value="ECO:0007669"/>
    <property type="project" value="UniProtKB-SubCell"/>
</dbReference>
<dbReference type="GO" id="GO:0051075">
    <property type="term" value="F:S-adenosylmethionine:tRNA ribosyltransferase-isomerase activity"/>
    <property type="evidence" value="ECO:0007669"/>
    <property type="project" value="UniProtKB-EC"/>
</dbReference>
<dbReference type="GO" id="GO:0008616">
    <property type="term" value="P:queuosine biosynthetic process"/>
    <property type="evidence" value="ECO:0007669"/>
    <property type="project" value="UniProtKB-UniRule"/>
</dbReference>
<dbReference type="GO" id="GO:0002099">
    <property type="term" value="P:tRNA wobble guanine modification"/>
    <property type="evidence" value="ECO:0007669"/>
    <property type="project" value="TreeGrafter"/>
</dbReference>
<dbReference type="FunFam" id="2.40.10.240:FF:000002">
    <property type="entry name" value="S-adenosylmethionine:tRNA ribosyltransferase-isomerase"/>
    <property type="match status" value="1"/>
</dbReference>
<dbReference type="FunFam" id="3.40.1780.10:FF:000001">
    <property type="entry name" value="S-adenosylmethionine:tRNA ribosyltransferase-isomerase"/>
    <property type="match status" value="1"/>
</dbReference>
<dbReference type="Gene3D" id="2.40.10.240">
    <property type="entry name" value="QueA-like"/>
    <property type="match status" value="1"/>
</dbReference>
<dbReference type="Gene3D" id="3.40.1780.10">
    <property type="entry name" value="QueA-like"/>
    <property type="match status" value="1"/>
</dbReference>
<dbReference type="HAMAP" id="MF_00113">
    <property type="entry name" value="QueA"/>
    <property type="match status" value="1"/>
</dbReference>
<dbReference type="InterPro" id="IPR003699">
    <property type="entry name" value="QueA"/>
</dbReference>
<dbReference type="InterPro" id="IPR042118">
    <property type="entry name" value="QueA_dom1"/>
</dbReference>
<dbReference type="InterPro" id="IPR042119">
    <property type="entry name" value="QueA_dom2"/>
</dbReference>
<dbReference type="InterPro" id="IPR036100">
    <property type="entry name" value="QueA_sf"/>
</dbReference>
<dbReference type="NCBIfam" id="NF001140">
    <property type="entry name" value="PRK00147.1"/>
    <property type="match status" value="1"/>
</dbReference>
<dbReference type="NCBIfam" id="TIGR00113">
    <property type="entry name" value="queA"/>
    <property type="match status" value="1"/>
</dbReference>
<dbReference type="PANTHER" id="PTHR30307">
    <property type="entry name" value="S-ADENOSYLMETHIONINE:TRNA RIBOSYLTRANSFERASE-ISOMERASE"/>
    <property type="match status" value="1"/>
</dbReference>
<dbReference type="PANTHER" id="PTHR30307:SF0">
    <property type="entry name" value="S-ADENOSYLMETHIONINE:TRNA RIBOSYLTRANSFERASE-ISOMERASE"/>
    <property type="match status" value="1"/>
</dbReference>
<dbReference type="Pfam" id="PF02547">
    <property type="entry name" value="Queuosine_synth"/>
    <property type="match status" value="1"/>
</dbReference>
<dbReference type="SUPFAM" id="SSF111337">
    <property type="entry name" value="QueA-like"/>
    <property type="match status" value="1"/>
</dbReference>
<protein>
    <recommendedName>
        <fullName evidence="1">S-adenosylmethionine:tRNA ribosyltransferase-isomerase</fullName>
        <ecNumber evidence="1">2.4.99.17</ecNumber>
    </recommendedName>
    <alternativeName>
        <fullName evidence="1">Queuosine biosynthesis protein QueA</fullName>
    </alternativeName>
</protein>
<feature type="chain" id="PRO_1000057736" description="S-adenosylmethionine:tRNA ribosyltransferase-isomerase">
    <location>
        <begin position="1"/>
        <end position="341"/>
    </location>
</feature>
<organism>
    <name type="scientific">Alkaliphilus metalliredigens (strain QYMF)</name>
    <dbReference type="NCBI Taxonomy" id="293826"/>
    <lineage>
        <taxon>Bacteria</taxon>
        <taxon>Bacillati</taxon>
        <taxon>Bacillota</taxon>
        <taxon>Clostridia</taxon>
        <taxon>Peptostreptococcales</taxon>
        <taxon>Natronincolaceae</taxon>
        <taxon>Alkaliphilus</taxon>
    </lineage>
</organism>
<evidence type="ECO:0000255" key="1">
    <source>
        <dbReference type="HAMAP-Rule" id="MF_00113"/>
    </source>
</evidence>
<keyword id="KW-0963">Cytoplasm</keyword>
<keyword id="KW-0671">Queuosine biosynthesis</keyword>
<keyword id="KW-1185">Reference proteome</keyword>
<keyword id="KW-0949">S-adenosyl-L-methionine</keyword>
<keyword id="KW-0808">Transferase</keyword>
<accession>A6TQM7</accession>
<sequence length="341" mass="38612">MKTNEFDFDLPDRLIAQTPLEKRDHSRLMVLDKNKQEIVHKHFYDITDYLNPGDCLVINNTRVLPARLFGVKENTGGKMEFLLLKRIDLNTWEVLVKPGKKAKIGSRFEFGEGILKAEVLSMADEGARIVRFEYEGVFEELLDQLGKMPLPPYITEELADRERYQTVYSKHEGSSAAPTAGLHFTPELLSEIKKKGINVVSITLHVGLGTFRPVKVDSLENHEMHAEYYEITEEAAQVINDTKKAGNRVFAVGTTSCRTLESASTEKGKIEANKGWTNIFIFPGYQFKILDGLITNFHLPESTLIMLVSALLGKEKTLQAYKVAVDEQYRFFSFGDAMLIV</sequence>
<gene>
    <name evidence="1" type="primary">queA</name>
    <name type="ordered locus">Amet_2341</name>
</gene>
<proteinExistence type="inferred from homology"/>
<comment type="function">
    <text evidence="1">Transfers and isomerizes the ribose moiety from AdoMet to the 7-aminomethyl group of 7-deazaguanine (preQ1-tRNA) to give epoxyqueuosine (oQ-tRNA).</text>
</comment>
<comment type="catalytic activity">
    <reaction evidence="1">
        <text>7-aminomethyl-7-carbaguanosine(34) in tRNA + S-adenosyl-L-methionine = epoxyqueuosine(34) in tRNA + adenine + L-methionine + 2 H(+)</text>
        <dbReference type="Rhea" id="RHEA:32155"/>
        <dbReference type="Rhea" id="RHEA-COMP:10342"/>
        <dbReference type="Rhea" id="RHEA-COMP:18582"/>
        <dbReference type="ChEBI" id="CHEBI:15378"/>
        <dbReference type="ChEBI" id="CHEBI:16708"/>
        <dbReference type="ChEBI" id="CHEBI:57844"/>
        <dbReference type="ChEBI" id="CHEBI:59789"/>
        <dbReference type="ChEBI" id="CHEBI:82833"/>
        <dbReference type="ChEBI" id="CHEBI:194443"/>
        <dbReference type="EC" id="2.4.99.17"/>
    </reaction>
</comment>
<comment type="pathway">
    <text evidence="1">tRNA modification; tRNA-queuosine biosynthesis.</text>
</comment>
<comment type="subunit">
    <text evidence="1">Monomer.</text>
</comment>
<comment type="subcellular location">
    <subcellularLocation>
        <location evidence="1">Cytoplasm</location>
    </subcellularLocation>
</comment>
<comment type="similarity">
    <text evidence="1">Belongs to the QueA family.</text>
</comment>
<reference key="1">
    <citation type="journal article" date="2016" name="Genome Announc.">
        <title>Complete genome sequence of Alkaliphilus metalliredigens strain QYMF, an alkaliphilic and metal-reducing bacterium isolated from borax-contaminated leachate ponds.</title>
        <authorList>
            <person name="Hwang C."/>
            <person name="Copeland A."/>
            <person name="Lucas S."/>
            <person name="Lapidus A."/>
            <person name="Barry K."/>
            <person name="Detter J.C."/>
            <person name="Glavina Del Rio T."/>
            <person name="Hammon N."/>
            <person name="Israni S."/>
            <person name="Dalin E."/>
            <person name="Tice H."/>
            <person name="Pitluck S."/>
            <person name="Chertkov O."/>
            <person name="Brettin T."/>
            <person name="Bruce D."/>
            <person name="Han C."/>
            <person name="Schmutz J."/>
            <person name="Larimer F."/>
            <person name="Land M.L."/>
            <person name="Hauser L."/>
            <person name="Kyrpides N."/>
            <person name="Mikhailova N."/>
            <person name="Ye Q."/>
            <person name="Zhou J."/>
            <person name="Richardson P."/>
            <person name="Fields M.W."/>
        </authorList>
    </citation>
    <scope>NUCLEOTIDE SEQUENCE [LARGE SCALE GENOMIC DNA]</scope>
    <source>
        <strain>QYMF</strain>
    </source>
</reference>